<gene>
    <name type="primary">Invadolysin</name>
    <name type="synonym">l(3)IX-14</name>
    <name type="ORF">CG3953</name>
</gene>
<comment type="function">
    <text evidence="3">Essential for the coordination of mitotic progression, and also plays a role in cell migration.</text>
</comment>
<comment type="cofactor">
    <cofactor evidence="1">
        <name>Zn(2+)</name>
        <dbReference type="ChEBI" id="CHEBI:29105"/>
    </cofactor>
    <text evidence="1">Binds 1 zinc ion per subunit.</text>
</comment>
<comment type="subcellular location">
    <subcellularLocation>
        <location evidence="3">Cytoplasm</location>
    </subcellularLocation>
    <text evidence="3">Found in ring-like structures resembling invadopodia. In migrating cells it relocalizes from internal structures to the leading edge of cells.</text>
</comment>
<comment type="similarity">
    <text evidence="4">Belongs to the peptidase M8 family.</text>
</comment>
<proteinExistence type="evidence at transcript level"/>
<evidence type="ECO:0000250" key="1">
    <source>
        <dbReference type="UniProtKB" id="P08148"/>
    </source>
</evidence>
<evidence type="ECO:0000255" key="2">
    <source>
        <dbReference type="PROSITE-ProRule" id="PRU10095"/>
    </source>
</evidence>
<evidence type="ECO:0000269" key="3">
    <source>
    </source>
</evidence>
<evidence type="ECO:0000305" key="4"/>
<sequence length="683" mass="76978">MAKTPPLRPHGNMAKFLAALGICSWLLVSATAHNCQHQHPKAHEVVHGVRIQLADSEDDSAGDPARHSVRRRSVAAEQPLRILLVYDESVYRLEEEKFNLINDTVLPEAVQFWEQALMVRETKGVIRLNRKCDSTQVYVKNGHTHCIDHCKATTMCGEVQVPDAHLDVCRVCNATGQNCRIDSNTQPGEGIENADFVFYVSARQTQRCFKGLTVAYAAHCQQEAALDRPIAGHANLCPESISTKPQELQTLISTVKHEILHALGFSVSLYAFFRDDDGKPRTPRKLDTGKPYLNEKLQIHQWSNETIRKVVRENWSVRGGHVNKVVDMMVTPRVIAEVRAHFNCNKLEGAELEDQGGEGTALTHWEKRILENEAMTGTHTQSPVFSRITLALMEDSGWYRANYSMATPLTWGKGLGCAFAMRSCKDWIQYNHARGRSIHPFCSKVKQDPLQTECTDDRNSVALCNLIRHEFELPKGYQNFDSLNHVKDGEEGFYGGSVSLADHCPYIQEFTWRSKNVIVRGSHCRFTENNPRPEKNFALESYGEGAKCFDHSESMWEERSCHQTREWQHWGSGCYKYDCFDGRLHILVGNYSYKCSFPGQKLSIRIAANGWLHKGAIMCPPCHELCGAQFAAQGKQCRPGEEPDPLNKYPRDNLACGAGSEKSRSVAIITAVLLLFGLRWGFS</sequence>
<dbReference type="EC" id="3.4.24.-" evidence="3"/>
<dbReference type="EMBL" id="AF234630">
    <property type="protein sequence ID" value="AAF40433.1"/>
    <property type="molecule type" value="mRNA"/>
</dbReference>
<dbReference type="EMBL" id="AE014297">
    <property type="protein sequence ID" value="AAF54501.2"/>
    <property type="molecule type" value="Genomic_DNA"/>
</dbReference>
<dbReference type="EMBL" id="BT001861">
    <property type="protein sequence ID" value="AAN71624.1"/>
    <property type="molecule type" value="mRNA"/>
</dbReference>
<dbReference type="RefSeq" id="NP_652072.1">
    <property type="nucleotide sequence ID" value="NM_143815.4"/>
</dbReference>
<dbReference type="SMR" id="Q9VH19"/>
<dbReference type="BioGRID" id="72358">
    <property type="interactions" value="31"/>
</dbReference>
<dbReference type="FunCoup" id="Q9VH19">
    <property type="interactions" value="930"/>
</dbReference>
<dbReference type="STRING" id="7227.FBpp0081659"/>
<dbReference type="MEROPS" id="M08.002"/>
<dbReference type="PaxDb" id="7227-FBpp0081659"/>
<dbReference type="EnsemblMetazoa" id="FBtr0082181">
    <property type="protein sequence ID" value="FBpp0081659"/>
    <property type="gene ID" value="FBgn0086359"/>
</dbReference>
<dbReference type="GeneID" id="49580"/>
<dbReference type="KEGG" id="dme:Dmel_CG3953"/>
<dbReference type="AGR" id="FB:FBgn0086359"/>
<dbReference type="CTD" id="49580"/>
<dbReference type="FlyBase" id="FBgn0086359">
    <property type="gene designation" value="Invadolysin"/>
</dbReference>
<dbReference type="VEuPathDB" id="VectorBase:FBgn0086359"/>
<dbReference type="eggNOG" id="KOG2556">
    <property type="taxonomic scope" value="Eukaryota"/>
</dbReference>
<dbReference type="GeneTree" id="ENSGT00390000008796"/>
<dbReference type="HOGENOM" id="CLU_023820_1_0_1"/>
<dbReference type="InParanoid" id="Q9VH19"/>
<dbReference type="OMA" id="MVRHHVH"/>
<dbReference type="OrthoDB" id="527990at2759"/>
<dbReference type="PhylomeDB" id="Q9VH19"/>
<dbReference type="BioGRID-ORCS" id="49580">
    <property type="hits" value="0 hits in 1 CRISPR screen"/>
</dbReference>
<dbReference type="GenomeRNAi" id="49580"/>
<dbReference type="PRO" id="PR:Q9VH19"/>
<dbReference type="Proteomes" id="UP000000803">
    <property type="component" value="Chromosome 3R"/>
</dbReference>
<dbReference type="Bgee" id="FBgn0086359">
    <property type="expression patterns" value="Expressed in visual pigment cell (sensu Nematoda and Protostomia) in testis and 200 other cell types or tissues"/>
</dbReference>
<dbReference type="GO" id="GO:0005737">
    <property type="term" value="C:cytoplasm"/>
    <property type="evidence" value="ECO:0000314"/>
    <property type="project" value="UniProtKB"/>
</dbReference>
<dbReference type="GO" id="GO:0016020">
    <property type="term" value="C:membrane"/>
    <property type="evidence" value="ECO:0007669"/>
    <property type="project" value="InterPro"/>
</dbReference>
<dbReference type="GO" id="GO:0046872">
    <property type="term" value="F:metal ion binding"/>
    <property type="evidence" value="ECO:0007669"/>
    <property type="project" value="UniProtKB-KW"/>
</dbReference>
<dbReference type="GO" id="GO:0004222">
    <property type="term" value="F:metalloendopeptidase activity"/>
    <property type="evidence" value="ECO:0007669"/>
    <property type="project" value="InterPro"/>
</dbReference>
<dbReference type="GO" id="GO:0008233">
    <property type="term" value="F:peptidase activity"/>
    <property type="evidence" value="ECO:0000314"/>
    <property type="project" value="FlyBase"/>
</dbReference>
<dbReference type="GO" id="GO:0007420">
    <property type="term" value="P:brain development"/>
    <property type="evidence" value="ECO:0000315"/>
    <property type="project" value="FlyBase"/>
</dbReference>
<dbReference type="GO" id="GO:0007155">
    <property type="term" value="P:cell adhesion"/>
    <property type="evidence" value="ECO:0007669"/>
    <property type="project" value="InterPro"/>
</dbReference>
<dbReference type="GO" id="GO:0051301">
    <property type="term" value="P:cell division"/>
    <property type="evidence" value="ECO:0007669"/>
    <property type="project" value="UniProtKB-KW"/>
</dbReference>
<dbReference type="GO" id="GO:0051298">
    <property type="term" value="P:centrosome duplication"/>
    <property type="evidence" value="ECO:0000315"/>
    <property type="project" value="FlyBase"/>
</dbReference>
<dbReference type="GO" id="GO:0006338">
    <property type="term" value="P:chromatin remodeling"/>
    <property type="evidence" value="ECO:0000315"/>
    <property type="project" value="FlyBase"/>
</dbReference>
<dbReference type="GO" id="GO:0022900">
    <property type="term" value="P:electron transport chain"/>
    <property type="evidence" value="ECO:0000314"/>
    <property type="project" value="FlyBase"/>
</dbReference>
<dbReference type="GO" id="GO:0008354">
    <property type="term" value="P:germ cell migration"/>
    <property type="evidence" value="ECO:0000315"/>
    <property type="project" value="FlyBase"/>
</dbReference>
<dbReference type="GO" id="GO:0008406">
    <property type="term" value="P:gonad development"/>
    <property type="evidence" value="ECO:0000315"/>
    <property type="project" value="FlyBase"/>
</dbReference>
<dbReference type="GO" id="GO:0007444">
    <property type="term" value="P:imaginal disc development"/>
    <property type="evidence" value="ECO:0000315"/>
    <property type="project" value="FlyBase"/>
</dbReference>
<dbReference type="GO" id="GO:0019915">
    <property type="term" value="P:lipid storage"/>
    <property type="evidence" value="ECO:0000315"/>
    <property type="project" value="FlyBase"/>
</dbReference>
<dbReference type="GO" id="GO:0007100">
    <property type="term" value="P:mitotic centrosome separation"/>
    <property type="evidence" value="ECO:0000315"/>
    <property type="project" value="FlyBase"/>
</dbReference>
<dbReference type="GO" id="GO:0007076">
    <property type="term" value="P:mitotic chromosome condensation"/>
    <property type="evidence" value="ECO:0000315"/>
    <property type="project" value="FlyBase"/>
</dbReference>
<dbReference type="GO" id="GO:0007052">
    <property type="term" value="P:mitotic spindle organization"/>
    <property type="evidence" value="ECO:0000315"/>
    <property type="project" value="FlyBase"/>
</dbReference>
<dbReference type="GO" id="GO:0045842">
    <property type="term" value="P:positive regulation of mitotic metaphase/anaphase transition"/>
    <property type="evidence" value="ECO:0000315"/>
    <property type="project" value="FlyBase"/>
</dbReference>
<dbReference type="GO" id="GO:0006508">
    <property type="term" value="P:proteolysis"/>
    <property type="evidence" value="ECO:0007669"/>
    <property type="project" value="UniProtKB-KW"/>
</dbReference>
<dbReference type="GO" id="GO:0051881">
    <property type="term" value="P:regulation of mitochondrial membrane potential"/>
    <property type="evidence" value="ECO:0000315"/>
    <property type="project" value="FlyBase"/>
</dbReference>
<dbReference type="FunFam" id="2.10.55.10:FF:000001">
    <property type="entry name" value="Leishmanolysin like peptidase"/>
    <property type="match status" value="1"/>
</dbReference>
<dbReference type="FunFam" id="3.10.170.20:FF:000004">
    <property type="entry name" value="Leishmanolysin-like peptidase"/>
    <property type="match status" value="1"/>
</dbReference>
<dbReference type="FunFam" id="3.90.132.10:FF:000001">
    <property type="entry name" value="leishmanolysin-like peptidase isoform X2"/>
    <property type="match status" value="1"/>
</dbReference>
<dbReference type="Gene3D" id="3.10.170.20">
    <property type="match status" value="1"/>
</dbReference>
<dbReference type="Gene3D" id="3.90.132.10">
    <property type="entry name" value="Leishmanolysin , domain 2"/>
    <property type="match status" value="1"/>
</dbReference>
<dbReference type="Gene3D" id="2.10.55.10">
    <property type="entry name" value="Leishmanolysin domain 3"/>
    <property type="match status" value="1"/>
</dbReference>
<dbReference type="InterPro" id="IPR001577">
    <property type="entry name" value="Peptidase_M8"/>
</dbReference>
<dbReference type="PANTHER" id="PTHR10942">
    <property type="entry name" value="LEISHMANOLYSIN-LIKE PEPTIDASE"/>
    <property type="match status" value="1"/>
</dbReference>
<dbReference type="PANTHER" id="PTHR10942:SF0">
    <property type="entry name" value="LEISHMANOLYSIN-LIKE PEPTIDASE"/>
    <property type="match status" value="1"/>
</dbReference>
<dbReference type="Pfam" id="PF01457">
    <property type="entry name" value="Peptidase_M8"/>
    <property type="match status" value="1"/>
</dbReference>
<dbReference type="SUPFAM" id="SSF55486">
    <property type="entry name" value="Metalloproteases ('zincins'), catalytic domain"/>
    <property type="match status" value="1"/>
</dbReference>
<protein>
    <recommendedName>
        <fullName evidence="4">Leishmanolysin-like peptidase</fullName>
        <ecNumber evidence="3">3.4.24.-</ecNumber>
    </recommendedName>
    <alternativeName>
        <fullName>Invadolysin</fullName>
    </alternativeName>
</protein>
<name>LMLN_DROME</name>
<feature type="chain" id="PRO_0000303080" description="Leishmanolysin-like peptidase">
    <location>
        <begin position="1"/>
        <end position="683"/>
    </location>
</feature>
<feature type="active site" evidence="2">
    <location>
        <position position="258"/>
    </location>
</feature>
<feature type="binding site" evidence="2">
    <location>
        <position position="257"/>
    </location>
    <ligand>
        <name>Zn(2+)</name>
        <dbReference type="ChEBI" id="CHEBI:29105"/>
        <note>catalytic</note>
    </ligand>
</feature>
<feature type="binding site" evidence="2">
    <location>
        <position position="261"/>
    </location>
    <ligand>
        <name>Zn(2+)</name>
        <dbReference type="ChEBI" id="CHEBI:29105"/>
        <note>catalytic</note>
    </ligand>
</feature>
<feature type="binding site" evidence="2">
    <location>
        <position position="364"/>
    </location>
    <ligand>
        <name>Zn(2+)</name>
        <dbReference type="ChEBI" id="CHEBI:29105"/>
        <note>catalytic</note>
    </ligand>
</feature>
<accession>Q9VH19</accession>
<accession>Q9NH00</accession>
<reference key="1">
    <citation type="journal article" date="2004" name="J. Cell Biol.">
        <title>Invadolysin: a novel, conserved metalloprotease links mitotic structural rearrangements with cell migration.</title>
        <authorList>
            <person name="McHugh B."/>
            <person name="Krause S.A."/>
            <person name="Yu B."/>
            <person name="Deans A.M."/>
            <person name="Heasman S."/>
            <person name="McLaughlin P."/>
            <person name="Heck M.M."/>
        </authorList>
    </citation>
    <scope>NUCLEOTIDE SEQUENCE [MRNA]</scope>
    <scope>FUNCTION</scope>
    <scope>SUBCELLULAR LOCATION</scope>
</reference>
<reference key="2">
    <citation type="journal article" date="2000" name="Science">
        <title>The genome sequence of Drosophila melanogaster.</title>
        <authorList>
            <person name="Adams M.D."/>
            <person name="Celniker S.E."/>
            <person name="Holt R.A."/>
            <person name="Evans C.A."/>
            <person name="Gocayne J.D."/>
            <person name="Amanatides P.G."/>
            <person name="Scherer S.E."/>
            <person name="Li P.W."/>
            <person name="Hoskins R.A."/>
            <person name="Galle R.F."/>
            <person name="George R.A."/>
            <person name="Lewis S.E."/>
            <person name="Richards S."/>
            <person name="Ashburner M."/>
            <person name="Henderson S.N."/>
            <person name="Sutton G.G."/>
            <person name="Wortman J.R."/>
            <person name="Yandell M.D."/>
            <person name="Zhang Q."/>
            <person name="Chen L.X."/>
            <person name="Brandon R.C."/>
            <person name="Rogers Y.-H.C."/>
            <person name="Blazej R.G."/>
            <person name="Champe M."/>
            <person name="Pfeiffer B.D."/>
            <person name="Wan K.H."/>
            <person name="Doyle C."/>
            <person name="Baxter E.G."/>
            <person name="Helt G."/>
            <person name="Nelson C.R."/>
            <person name="Miklos G.L.G."/>
            <person name="Abril J.F."/>
            <person name="Agbayani A."/>
            <person name="An H.-J."/>
            <person name="Andrews-Pfannkoch C."/>
            <person name="Baldwin D."/>
            <person name="Ballew R.M."/>
            <person name="Basu A."/>
            <person name="Baxendale J."/>
            <person name="Bayraktaroglu L."/>
            <person name="Beasley E.M."/>
            <person name="Beeson K.Y."/>
            <person name="Benos P.V."/>
            <person name="Berman B.P."/>
            <person name="Bhandari D."/>
            <person name="Bolshakov S."/>
            <person name="Borkova D."/>
            <person name="Botchan M.R."/>
            <person name="Bouck J."/>
            <person name="Brokstein P."/>
            <person name="Brottier P."/>
            <person name="Burtis K.C."/>
            <person name="Busam D.A."/>
            <person name="Butler H."/>
            <person name="Cadieu E."/>
            <person name="Center A."/>
            <person name="Chandra I."/>
            <person name="Cherry J.M."/>
            <person name="Cawley S."/>
            <person name="Dahlke C."/>
            <person name="Davenport L.B."/>
            <person name="Davies P."/>
            <person name="de Pablos B."/>
            <person name="Delcher A."/>
            <person name="Deng Z."/>
            <person name="Mays A.D."/>
            <person name="Dew I."/>
            <person name="Dietz S.M."/>
            <person name="Dodson K."/>
            <person name="Doup L.E."/>
            <person name="Downes M."/>
            <person name="Dugan-Rocha S."/>
            <person name="Dunkov B.C."/>
            <person name="Dunn P."/>
            <person name="Durbin K.J."/>
            <person name="Evangelista C.C."/>
            <person name="Ferraz C."/>
            <person name="Ferriera S."/>
            <person name="Fleischmann W."/>
            <person name="Fosler C."/>
            <person name="Gabrielian A.E."/>
            <person name="Garg N.S."/>
            <person name="Gelbart W.M."/>
            <person name="Glasser K."/>
            <person name="Glodek A."/>
            <person name="Gong F."/>
            <person name="Gorrell J.H."/>
            <person name="Gu Z."/>
            <person name="Guan P."/>
            <person name="Harris M."/>
            <person name="Harris N.L."/>
            <person name="Harvey D.A."/>
            <person name="Heiman T.J."/>
            <person name="Hernandez J.R."/>
            <person name="Houck J."/>
            <person name="Hostin D."/>
            <person name="Houston K.A."/>
            <person name="Howland T.J."/>
            <person name="Wei M.-H."/>
            <person name="Ibegwam C."/>
            <person name="Jalali M."/>
            <person name="Kalush F."/>
            <person name="Karpen G.H."/>
            <person name="Ke Z."/>
            <person name="Kennison J.A."/>
            <person name="Ketchum K.A."/>
            <person name="Kimmel B.E."/>
            <person name="Kodira C.D."/>
            <person name="Kraft C.L."/>
            <person name="Kravitz S."/>
            <person name="Kulp D."/>
            <person name="Lai Z."/>
            <person name="Lasko P."/>
            <person name="Lei Y."/>
            <person name="Levitsky A.A."/>
            <person name="Li J.H."/>
            <person name="Li Z."/>
            <person name="Liang Y."/>
            <person name="Lin X."/>
            <person name="Liu X."/>
            <person name="Mattei B."/>
            <person name="McIntosh T.C."/>
            <person name="McLeod M.P."/>
            <person name="McPherson D."/>
            <person name="Merkulov G."/>
            <person name="Milshina N.V."/>
            <person name="Mobarry C."/>
            <person name="Morris J."/>
            <person name="Moshrefi A."/>
            <person name="Mount S.M."/>
            <person name="Moy M."/>
            <person name="Murphy B."/>
            <person name="Murphy L."/>
            <person name="Muzny D.M."/>
            <person name="Nelson D.L."/>
            <person name="Nelson D.R."/>
            <person name="Nelson K.A."/>
            <person name="Nixon K."/>
            <person name="Nusskern D.R."/>
            <person name="Pacleb J.M."/>
            <person name="Palazzolo M."/>
            <person name="Pittman G.S."/>
            <person name="Pan S."/>
            <person name="Pollard J."/>
            <person name="Puri V."/>
            <person name="Reese M.G."/>
            <person name="Reinert K."/>
            <person name="Remington K."/>
            <person name="Saunders R.D.C."/>
            <person name="Scheeler F."/>
            <person name="Shen H."/>
            <person name="Shue B.C."/>
            <person name="Siden-Kiamos I."/>
            <person name="Simpson M."/>
            <person name="Skupski M.P."/>
            <person name="Smith T.J."/>
            <person name="Spier E."/>
            <person name="Spradling A.C."/>
            <person name="Stapleton M."/>
            <person name="Strong R."/>
            <person name="Sun E."/>
            <person name="Svirskas R."/>
            <person name="Tector C."/>
            <person name="Turner R."/>
            <person name="Venter E."/>
            <person name="Wang A.H."/>
            <person name="Wang X."/>
            <person name="Wang Z.-Y."/>
            <person name="Wassarman D.A."/>
            <person name="Weinstock G.M."/>
            <person name="Weissenbach J."/>
            <person name="Williams S.M."/>
            <person name="Woodage T."/>
            <person name="Worley K.C."/>
            <person name="Wu D."/>
            <person name="Yang S."/>
            <person name="Yao Q.A."/>
            <person name="Ye J."/>
            <person name="Yeh R.-F."/>
            <person name="Zaveri J.S."/>
            <person name="Zhan M."/>
            <person name="Zhang G."/>
            <person name="Zhao Q."/>
            <person name="Zheng L."/>
            <person name="Zheng X.H."/>
            <person name="Zhong F.N."/>
            <person name="Zhong W."/>
            <person name="Zhou X."/>
            <person name="Zhu S.C."/>
            <person name="Zhu X."/>
            <person name="Smith H.O."/>
            <person name="Gibbs R.A."/>
            <person name="Myers E.W."/>
            <person name="Rubin G.M."/>
            <person name="Venter J.C."/>
        </authorList>
    </citation>
    <scope>NUCLEOTIDE SEQUENCE [LARGE SCALE GENOMIC DNA]</scope>
    <source>
        <strain>Berkeley</strain>
    </source>
</reference>
<reference key="3">
    <citation type="journal article" date="2002" name="Genome Biol.">
        <title>Annotation of the Drosophila melanogaster euchromatic genome: a systematic review.</title>
        <authorList>
            <person name="Misra S."/>
            <person name="Crosby M.A."/>
            <person name="Mungall C.J."/>
            <person name="Matthews B.B."/>
            <person name="Campbell K.S."/>
            <person name="Hradecky P."/>
            <person name="Huang Y."/>
            <person name="Kaminker J.S."/>
            <person name="Millburn G.H."/>
            <person name="Prochnik S.E."/>
            <person name="Smith C.D."/>
            <person name="Tupy J.L."/>
            <person name="Whitfield E.J."/>
            <person name="Bayraktaroglu L."/>
            <person name="Berman B.P."/>
            <person name="Bettencourt B.R."/>
            <person name="Celniker S.E."/>
            <person name="de Grey A.D.N.J."/>
            <person name="Drysdale R.A."/>
            <person name="Harris N.L."/>
            <person name="Richter J."/>
            <person name="Russo S."/>
            <person name="Schroeder A.J."/>
            <person name="Shu S.Q."/>
            <person name="Stapleton M."/>
            <person name="Yamada C."/>
            <person name="Ashburner M."/>
            <person name="Gelbart W.M."/>
            <person name="Rubin G.M."/>
            <person name="Lewis S.E."/>
        </authorList>
    </citation>
    <scope>GENOME REANNOTATION</scope>
    <source>
        <strain>Berkeley</strain>
    </source>
</reference>
<reference key="4">
    <citation type="journal article" date="2002" name="Genome Biol.">
        <title>A Drosophila full-length cDNA resource.</title>
        <authorList>
            <person name="Stapleton M."/>
            <person name="Carlson J.W."/>
            <person name="Brokstein P."/>
            <person name="Yu C."/>
            <person name="Champe M."/>
            <person name="George R.A."/>
            <person name="Guarin H."/>
            <person name="Kronmiller B."/>
            <person name="Pacleb J.M."/>
            <person name="Park S."/>
            <person name="Wan K.H."/>
            <person name="Rubin G.M."/>
            <person name="Celniker S.E."/>
        </authorList>
    </citation>
    <scope>NUCLEOTIDE SEQUENCE [LARGE SCALE MRNA]</scope>
    <source>
        <strain>Berkeley</strain>
        <tissue>Head</tissue>
    </source>
</reference>
<keyword id="KW-0131">Cell cycle</keyword>
<keyword id="KW-0132">Cell division</keyword>
<keyword id="KW-0963">Cytoplasm</keyword>
<keyword id="KW-0378">Hydrolase</keyword>
<keyword id="KW-0479">Metal-binding</keyword>
<keyword id="KW-0482">Metalloprotease</keyword>
<keyword id="KW-0498">Mitosis</keyword>
<keyword id="KW-0645">Protease</keyword>
<keyword id="KW-1185">Reference proteome</keyword>
<keyword id="KW-0862">Zinc</keyword>
<organism>
    <name type="scientific">Drosophila melanogaster</name>
    <name type="common">Fruit fly</name>
    <dbReference type="NCBI Taxonomy" id="7227"/>
    <lineage>
        <taxon>Eukaryota</taxon>
        <taxon>Metazoa</taxon>
        <taxon>Ecdysozoa</taxon>
        <taxon>Arthropoda</taxon>
        <taxon>Hexapoda</taxon>
        <taxon>Insecta</taxon>
        <taxon>Pterygota</taxon>
        <taxon>Neoptera</taxon>
        <taxon>Endopterygota</taxon>
        <taxon>Diptera</taxon>
        <taxon>Brachycera</taxon>
        <taxon>Muscomorpha</taxon>
        <taxon>Ephydroidea</taxon>
        <taxon>Drosophilidae</taxon>
        <taxon>Drosophila</taxon>
        <taxon>Sophophora</taxon>
    </lineage>
</organism>